<dbReference type="EMBL" id="CH476596">
    <property type="protein sequence ID" value="EAU37697.1"/>
    <property type="molecule type" value="Genomic_DNA"/>
</dbReference>
<dbReference type="RefSeq" id="XP_001211913.1">
    <property type="nucleotide sequence ID" value="XM_001211913.1"/>
</dbReference>
<dbReference type="SMR" id="Q0CU99"/>
<dbReference type="STRING" id="341663.Q0CU99"/>
<dbReference type="EnsemblFungi" id="EAU37697">
    <property type="protein sequence ID" value="EAU37697"/>
    <property type="gene ID" value="ATEG_02735"/>
</dbReference>
<dbReference type="GeneID" id="4317034"/>
<dbReference type="VEuPathDB" id="FungiDB:ATEG_02735"/>
<dbReference type="eggNOG" id="KOG1974">
    <property type="taxonomic scope" value="Eukaryota"/>
</dbReference>
<dbReference type="HOGENOM" id="CLU_004390_0_0_1"/>
<dbReference type="OMA" id="VNHHRHT"/>
<dbReference type="OrthoDB" id="310853at2759"/>
<dbReference type="Proteomes" id="UP000007963">
    <property type="component" value="Unassembled WGS sequence"/>
</dbReference>
<dbReference type="GO" id="GO:0031298">
    <property type="term" value="C:replication fork protection complex"/>
    <property type="evidence" value="ECO:0007669"/>
    <property type="project" value="TreeGrafter"/>
</dbReference>
<dbReference type="GO" id="GO:0003677">
    <property type="term" value="F:DNA binding"/>
    <property type="evidence" value="ECO:0007669"/>
    <property type="project" value="TreeGrafter"/>
</dbReference>
<dbReference type="GO" id="GO:0006281">
    <property type="term" value="P:DNA repair"/>
    <property type="evidence" value="ECO:0007669"/>
    <property type="project" value="UniProtKB-KW"/>
</dbReference>
<dbReference type="GO" id="GO:0000076">
    <property type="term" value="P:DNA replication checkpoint signaling"/>
    <property type="evidence" value="ECO:0007669"/>
    <property type="project" value="TreeGrafter"/>
</dbReference>
<dbReference type="GO" id="GO:0051321">
    <property type="term" value="P:meiotic cell cycle"/>
    <property type="evidence" value="ECO:0007669"/>
    <property type="project" value="UniProtKB-KW"/>
</dbReference>
<dbReference type="GO" id="GO:0043111">
    <property type="term" value="P:replication fork arrest"/>
    <property type="evidence" value="ECO:0007669"/>
    <property type="project" value="TreeGrafter"/>
</dbReference>
<dbReference type="InterPro" id="IPR044998">
    <property type="entry name" value="Timeless"/>
</dbReference>
<dbReference type="InterPro" id="IPR006906">
    <property type="entry name" value="Timeless_N"/>
</dbReference>
<dbReference type="PANTHER" id="PTHR22940:SF4">
    <property type="entry name" value="PROTEIN TIMELESS HOMOLOG"/>
    <property type="match status" value="1"/>
</dbReference>
<dbReference type="PANTHER" id="PTHR22940">
    <property type="entry name" value="TIMEOUT/TIMELESS-2"/>
    <property type="match status" value="1"/>
</dbReference>
<dbReference type="Pfam" id="PF04821">
    <property type="entry name" value="TIMELESS"/>
    <property type="match status" value="1"/>
</dbReference>
<protein>
    <recommendedName>
        <fullName>Topoisomerase 1-associated factor 1</fullName>
    </recommendedName>
</protein>
<organism>
    <name type="scientific">Aspergillus terreus (strain NIH 2624 / FGSC A1156)</name>
    <dbReference type="NCBI Taxonomy" id="341663"/>
    <lineage>
        <taxon>Eukaryota</taxon>
        <taxon>Fungi</taxon>
        <taxon>Dikarya</taxon>
        <taxon>Ascomycota</taxon>
        <taxon>Pezizomycotina</taxon>
        <taxon>Eurotiomycetes</taxon>
        <taxon>Eurotiomycetidae</taxon>
        <taxon>Eurotiales</taxon>
        <taxon>Aspergillaceae</taxon>
        <taxon>Aspergillus</taxon>
        <taxon>Aspergillus subgen. Circumdati</taxon>
    </lineage>
</organism>
<gene>
    <name type="primary">tof1</name>
    <name type="ORF">ATEG_02735</name>
</gene>
<feature type="chain" id="PRO_0000301732" description="Topoisomerase 1-associated factor 1">
    <location>
        <begin position="1"/>
        <end position="1147"/>
    </location>
</feature>
<feature type="region of interest" description="Disordered" evidence="2">
    <location>
        <begin position="564"/>
        <end position="598"/>
    </location>
</feature>
<feature type="region of interest" description="Disordered" evidence="2">
    <location>
        <begin position="799"/>
        <end position="823"/>
    </location>
</feature>
<feature type="region of interest" description="Disordered" evidence="2">
    <location>
        <begin position="898"/>
        <end position="1002"/>
    </location>
</feature>
<feature type="region of interest" description="Disordered" evidence="2">
    <location>
        <begin position="1027"/>
        <end position="1147"/>
    </location>
</feature>
<feature type="compositionally biased region" description="Basic residues" evidence="2">
    <location>
        <begin position="566"/>
        <end position="575"/>
    </location>
</feature>
<feature type="compositionally biased region" description="Acidic residues" evidence="2">
    <location>
        <begin position="584"/>
        <end position="597"/>
    </location>
</feature>
<feature type="compositionally biased region" description="Polar residues" evidence="2">
    <location>
        <begin position="907"/>
        <end position="916"/>
    </location>
</feature>
<feature type="compositionally biased region" description="Basic and acidic residues" evidence="2">
    <location>
        <begin position="950"/>
        <end position="992"/>
    </location>
</feature>
<feature type="compositionally biased region" description="Basic and acidic residues" evidence="2">
    <location>
        <begin position="1054"/>
        <end position="1063"/>
    </location>
</feature>
<feature type="compositionally biased region" description="Basic and acidic residues" evidence="2">
    <location>
        <begin position="1096"/>
        <end position="1106"/>
    </location>
</feature>
<sequence length="1147" mass="132551">MDEELAFGQTVEVVDPDVRAHVYSLVTALGGFNGEDADKYVLGDDALACLRDIRRWLKLYDEKYNRMDVARCLGESNLVNGDLLPILSAWWHGNQGSRYMSRIALACKVELLVPLTWPLEVHAEMPANHLRHIPYLQHVQVLYKRGLLSRGHTPLLRAIIRIALPSMAVSRSERTTRDEGILKLMLYLLRNIAIISTNARLAAEGDEEETSRSATINAFQEQDAFALLLTMCSNVGDDFTMQDMVLLEIVFHLIKGVDVEKLFMSDAQRSAKRTDELSELLSKETSLRREYAKNAPTRHGRFGTMIWVKRDDAKMSTVSGQDVLKDSQATLYKMDQSKKWNKPKQRQKQELSVVNNDFDTPVHLNPIASKNLRMFVEEFLDSGFNPLFTHVRKAIEREADRVMDINSRQYFYAVAWFLEAERTRRVRQREKHSQSEKAAKEFEPDSFSLIASVLNQETFVFLNRSMQYSFDQKDWADLNAEMRCFTQILLTVQEMATSPLEEDQEIAENIQNRIFYEETTHDRILAIVRGYKDQGYGYLDACTELSHVFLRMLERYSKENTDMQIRSRRRAKRKKQLEQKGDENNGEEQDSEEEEMLEAERVSKERKFDFRRFSAKFCNQKCVDTFVSFARFYRELNSDQLKRLHRYFYRIAFKEEMSVLLFRVDIINLFYRMIKGPGGMDSTKPIFKEWEEFVRQLIRRMVKKIDQRPALITEMLFSKINSTMYYLEFGHEKQTISVTRRPPAELVVNPNDAETTEDKIKIVIGALVKDGKNRLVSWLSGVLDSAADEREAFEIQEAAEREENTRASRAPNPMIPVEPSDDDCKNEMFSNAKLRLLMALVKFERLGVEDIPGASWVVPAHLSSADIRDIKSTVDKCLADPFQGTFDREPQAMLQRKFQRENRGSFEPTQEVSFGNDSEGEDTPEFLFPPNPRSKSNALEELKKKRKKCKNDDGEKEPLDEQTIEERRRAREENARSRQAKIKSDLYVHASDEESDDEADEEFFRLEEKRRKEQSERIRQALLLGKVEELANKAGKKTQRKRPSDPQIAGDSESQNKRLRQDIPEDDDDLIMGGSEPDSPGLQTGDHDSDDDLRFEDDLAFRRNRESSAASDRNGPPGEAKEDEDTPVAASGRRRMRAGFVIDSDSE</sequence>
<proteinExistence type="inferred from homology"/>
<keyword id="KW-0131">Cell cycle</keyword>
<keyword id="KW-0227">DNA damage</keyword>
<keyword id="KW-0234">DNA repair</keyword>
<keyword id="KW-0236">DNA replication inhibitor</keyword>
<keyword id="KW-0469">Meiosis</keyword>
<keyword id="KW-0539">Nucleus</keyword>
<keyword id="KW-1185">Reference proteome</keyword>
<name>TOF1_ASPTN</name>
<evidence type="ECO:0000250" key="1"/>
<evidence type="ECO:0000256" key="2">
    <source>
        <dbReference type="SAM" id="MobiDB-lite"/>
    </source>
</evidence>
<evidence type="ECO:0000305" key="3"/>
<comment type="function">
    <text evidence="1">Forms a fork protection complex (FPC) with csm3 and which is required for chromosome segregation during meiosis and DNA damage repair. FPC coordinates leading and lagging strand synthesis and moves with the replication fork. FPC stabilizes replication forks in a configuration that is recognized by replication checkpoint sensors (By similarity).</text>
</comment>
<comment type="subunit">
    <text evidence="1">Component of the fork protection complex (FPC) consisting of tof1 and csm3.</text>
</comment>
<comment type="subcellular location">
    <subcellularLocation>
        <location evidence="1">Nucleus</location>
    </subcellularLocation>
</comment>
<comment type="similarity">
    <text evidence="3">Belongs to the timeless family.</text>
</comment>
<reference key="1">
    <citation type="submission" date="2005-09" db="EMBL/GenBank/DDBJ databases">
        <title>Annotation of the Aspergillus terreus NIH2624 genome.</title>
        <authorList>
            <person name="Birren B.W."/>
            <person name="Lander E.S."/>
            <person name="Galagan J.E."/>
            <person name="Nusbaum C."/>
            <person name="Devon K."/>
            <person name="Henn M."/>
            <person name="Ma L.-J."/>
            <person name="Jaffe D.B."/>
            <person name="Butler J."/>
            <person name="Alvarez P."/>
            <person name="Gnerre S."/>
            <person name="Grabherr M."/>
            <person name="Kleber M."/>
            <person name="Mauceli E.W."/>
            <person name="Brockman W."/>
            <person name="Rounsley S."/>
            <person name="Young S.K."/>
            <person name="LaButti K."/>
            <person name="Pushparaj V."/>
            <person name="DeCaprio D."/>
            <person name="Crawford M."/>
            <person name="Koehrsen M."/>
            <person name="Engels R."/>
            <person name="Montgomery P."/>
            <person name="Pearson M."/>
            <person name="Howarth C."/>
            <person name="Larson L."/>
            <person name="Luoma S."/>
            <person name="White J."/>
            <person name="Alvarado L."/>
            <person name="Kodira C.D."/>
            <person name="Zeng Q."/>
            <person name="Oleary S."/>
            <person name="Yandava C."/>
            <person name="Denning D.W."/>
            <person name="Nierman W.C."/>
            <person name="Milne T."/>
            <person name="Madden K."/>
        </authorList>
    </citation>
    <scope>NUCLEOTIDE SEQUENCE [LARGE SCALE GENOMIC DNA]</scope>
    <source>
        <strain>NIH 2624 / FGSC A1156</strain>
    </source>
</reference>
<accession>Q0CU99</accession>